<protein>
    <recommendedName>
        <fullName evidence="1">ATP-dependent protease ATPase subunit HslU</fullName>
    </recommendedName>
    <alternativeName>
        <fullName evidence="1">Unfoldase HslU</fullName>
    </alternativeName>
</protein>
<reference key="1">
    <citation type="submission" date="2009-07" db="EMBL/GenBank/DDBJ databases">
        <title>Complete sequence of Pectobacterium carotovorum subsp. carotovorum PC1.</title>
        <authorList>
            <consortium name="US DOE Joint Genome Institute"/>
            <person name="Lucas S."/>
            <person name="Copeland A."/>
            <person name="Lapidus A."/>
            <person name="Glavina del Rio T."/>
            <person name="Tice H."/>
            <person name="Bruce D."/>
            <person name="Goodwin L."/>
            <person name="Pitluck S."/>
            <person name="Munk A.C."/>
            <person name="Brettin T."/>
            <person name="Detter J.C."/>
            <person name="Han C."/>
            <person name="Tapia R."/>
            <person name="Larimer F."/>
            <person name="Land M."/>
            <person name="Hauser L."/>
            <person name="Kyrpides N."/>
            <person name="Mikhailova N."/>
            <person name="Balakrishnan V."/>
            <person name="Glasner J."/>
            <person name="Perna N.T."/>
        </authorList>
    </citation>
    <scope>NUCLEOTIDE SEQUENCE [LARGE SCALE GENOMIC DNA]</scope>
    <source>
        <strain>PC1</strain>
    </source>
</reference>
<name>HSLU_PECCP</name>
<accession>C6DHM6</accession>
<feature type="chain" id="PRO_1000204526" description="ATP-dependent protease ATPase subunit HslU">
    <location>
        <begin position="1"/>
        <end position="443"/>
    </location>
</feature>
<feature type="binding site" evidence="1">
    <location>
        <position position="18"/>
    </location>
    <ligand>
        <name>ATP</name>
        <dbReference type="ChEBI" id="CHEBI:30616"/>
    </ligand>
</feature>
<feature type="binding site" evidence="1">
    <location>
        <begin position="60"/>
        <end position="65"/>
    </location>
    <ligand>
        <name>ATP</name>
        <dbReference type="ChEBI" id="CHEBI:30616"/>
    </ligand>
</feature>
<feature type="binding site" evidence="1">
    <location>
        <position position="256"/>
    </location>
    <ligand>
        <name>ATP</name>
        <dbReference type="ChEBI" id="CHEBI:30616"/>
    </ligand>
</feature>
<feature type="binding site" evidence="1">
    <location>
        <position position="321"/>
    </location>
    <ligand>
        <name>ATP</name>
        <dbReference type="ChEBI" id="CHEBI:30616"/>
    </ligand>
</feature>
<feature type="binding site" evidence="1">
    <location>
        <position position="393"/>
    </location>
    <ligand>
        <name>ATP</name>
        <dbReference type="ChEBI" id="CHEBI:30616"/>
    </ligand>
</feature>
<gene>
    <name evidence="1" type="primary">hslU</name>
    <name type="ordered locus">PC1_0165</name>
</gene>
<evidence type="ECO:0000255" key="1">
    <source>
        <dbReference type="HAMAP-Rule" id="MF_00249"/>
    </source>
</evidence>
<organism>
    <name type="scientific">Pectobacterium carotovorum subsp. carotovorum (strain PC1)</name>
    <dbReference type="NCBI Taxonomy" id="561230"/>
    <lineage>
        <taxon>Bacteria</taxon>
        <taxon>Pseudomonadati</taxon>
        <taxon>Pseudomonadota</taxon>
        <taxon>Gammaproteobacteria</taxon>
        <taxon>Enterobacterales</taxon>
        <taxon>Pectobacteriaceae</taxon>
        <taxon>Pectobacterium</taxon>
    </lineage>
</organism>
<comment type="function">
    <text evidence="1">ATPase subunit of a proteasome-like degradation complex; this subunit has chaperone activity. The binding of ATP and its subsequent hydrolysis by HslU are essential for unfolding of protein substrates subsequently hydrolyzed by HslV. HslU recognizes the N-terminal part of its protein substrates and unfolds these before they are guided to HslV for hydrolysis.</text>
</comment>
<comment type="subunit">
    <text evidence="1">A double ring-shaped homohexamer of HslV is capped on each side by a ring-shaped HslU homohexamer. The assembly of the HslU/HslV complex is dependent on binding of ATP.</text>
</comment>
<comment type="subcellular location">
    <subcellularLocation>
        <location evidence="1">Cytoplasm</location>
    </subcellularLocation>
</comment>
<comment type="similarity">
    <text evidence="1">Belongs to the ClpX chaperone family. HslU subfamily.</text>
</comment>
<sequence length="443" mass="49593">MSEMTPREIVSELDSYIIGQHKAKRAVSIALRNRWRRMQLDEALRHEVTPKNILMIGPTGVGKTEIARRLAKLANAPFIKVEATKFTEVGYVGKEVDSIIRDLTDSAIKMVRLQSIEKNRFRAEEMAEDRILDVLIPPAKNNWGQAESTPEPSAARQAFRKKLREGQLDDKEIEIDLAAAPVGVEIMAPPGMEEMTNQLQSMFQNLAGQKQKARKIKIKDAFKLLIEEEAAKLVNPEELKQQAIEAVEQHGIVFIDEIDKICKRGESSGPDVSREGVQRDLLPLVEGCTVSTKHGMVKTDHILFIASGAFQVASPSDLIPELQGRLPIRVELQALTTEDFERILTEPSASLTEQYKALMATEGVDISFTADGIRRIAEAAWQVNESTENIGARRLHTVMERLIEDVSYDASEMNGQSVTIDADYVRNHLDELVADEDLSRFIL</sequence>
<keyword id="KW-0067">ATP-binding</keyword>
<keyword id="KW-0143">Chaperone</keyword>
<keyword id="KW-0963">Cytoplasm</keyword>
<keyword id="KW-0547">Nucleotide-binding</keyword>
<keyword id="KW-0346">Stress response</keyword>
<proteinExistence type="inferred from homology"/>
<dbReference type="EMBL" id="CP001657">
    <property type="protein sequence ID" value="ACT11226.1"/>
    <property type="molecule type" value="Genomic_DNA"/>
</dbReference>
<dbReference type="RefSeq" id="WP_010299298.1">
    <property type="nucleotide sequence ID" value="NC_012917.1"/>
</dbReference>
<dbReference type="SMR" id="C6DHM6"/>
<dbReference type="STRING" id="561230.PC1_0165"/>
<dbReference type="GeneID" id="61346076"/>
<dbReference type="KEGG" id="pct:PC1_0165"/>
<dbReference type="eggNOG" id="COG1220">
    <property type="taxonomic scope" value="Bacteria"/>
</dbReference>
<dbReference type="HOGENOM" id="CLU_033123_0_0_6"/>
<dbReference type="OrthoDB" id="9804062at2"/>
<dbReference type="Proteomes" id="UP000002736">
    <property type="component" value="Chromosome"/>
</dbReference>
<dbReference type="GO" id="GO:0009376">
    <property type="term" value="C:HslUV protease complex"/>
    <property type="evidence" value="ECO:0007669"/>
    <property type="project" value="UniProtKB-UniRule"/>
</dbReference>
<dbReference type="GO" id="GO:0005524">
    <property type="term" value="F:ATP binding"/>
    <property type="evidence" value="ECO:0007669"/>
    <property type="project" value="UniProtKB-UniRule"/>
</dbReference>
<dbReference type="GO" id="GO:0016887">
    <property type="term" value="F:ATP hydrolysis activity"/>
    <property type="evidence" value="ECO:0007669"/>
    <property type="project" value="InterPro"/>
</dbReference>
<dbReference type="GO" id="GO:0008233">
    <property type="term" value="F:peptidase activity"/>
    <property type="evidence" value="ECO:0007669"/>
    <property type="project" value="InterPro"/>
</dbReference>
<dbReference type="GO" id="GO:0036402">
    <property type="term" value="F:proteasome-activating activity"/>
    <property type="evidence" value="ECO:0007669"/>
    <property type="project" value="UniProtKB-UniRule"/>
</dbReference>
<dbReference type="GO" id="GO:0043335">
    <property type="term" value="P:protein unfolding"/>
    <property type="evidence" value="ECO:0007669"/>
    <property type="project" value="UniProtKB-UniRule"/>
</dbReference>
<dbReference type="GO" id="GO:0051603">
    <property type="term" value="P:proteolysis involved in protein catabolic process"/>
    <property type="evidence" value="ECO:0007669"/>
    <property type="project" value="TreeGrafter"/>
</dbReference>
<dbReference type="CDD" id="cd19498">
    <property type="entry name" value="RecA-like_HslU"/>
    <property type="match status" value="1"/>
</dbReference>
<dbReference type="FunFam" id="1.10.8.10:FF:000028">
    <property type="entry name" value="ATP-dependent protease ATPase subunit HslU"/>
    <property type="match status" value="2"/>
</dbReference>
<dbReference type="FunFam" id="1.10.8.60:FF:000027">
    <property type="entry name" value="ATP-dependent protease ATPase subunit HslU"/>
    <property type="match status" value="1"/>
</dbReference>
<dbReference type="FunFam" id="3.40.50.300:FF:000213">
    <property type="entry name" value="ATP-dependent protease ATPase subunit HslU"/>
    <property type="match status" value="1"/>
</dbReference>
<dbReference type="FunFam" id="3.40.50.300:FF:000220">
    <property type="entry name" value="ATP-dependent protease ATPase subunit HslU"/>
    <property type="match status" value="1"/>
</dbReference>
<dbReference type="Gene3D" id="1.10.8.60">
    <property type="match status" value="1"/>
</dbReference>
<dbReference type="Gene3D" id="1.10.8.10">
    <property type="entry name" value="DNA helicase RuvA subunit, C-terminal domain"/>
    <property type="match status" value="1"/>
</dbReference>
<dbReference type="Gene3D" id="3.40.50.300">
    <property type="entry name" value="P-loop containing nucleotide triphosphate hydrolases"/>
    <property type="match status" value="2"/>
</dbReference>
<dbReference type="HAMAP" id="MF_00249">
    <property type="entry name" value="HslU"/>
    <property type="match status" value="1"/>
</dbReference>
<dbReference type="InterPro" id="IPR003593">
    <property type="entry name" value="AAA+_ATPase"/>
</dbReference>
<dbReference type="InterPro" id="IPR050052">
    <property type="entry name" value="ATP-dep_Clp_protease_ClpX"/>
</dbReference>
<dbReference type="InterPro" id="IPR003959">
    <property type="entry name" value="ATPase_AAA_core"/>
</dbReference>
<dbReference type="InterPro" id="IPR019489">
    <property type="entry name" value="Clp_ATPase_C"/>
</dbReference>
<dbReference type="InterPro" id="IPR004491">
    <property type="entry name" value="HslU"/>
</dbReference>
<dbReference type="InterPro" id="IPR027417">
    <property type="entry name" value="P-loop_NTPase"/>
</dbReference>
<dbReference type="NCBIfam" id="TIGR00390">
    <property type="entry name" value="hslU"/>
    <property type="match status" value="1"/>
</dbReference>
<dbReference type="NCBIfam" id="NF003544">
    <property type="entry name" value="PRK05201.1"/>
    <property type="match status" value="1"/>
</dbReference>
<dbReference type="PANTHER" id="PTHR48102">
    <property type="entry name" value="ATP-DEPENDENT CLP PROTEASE ATP-BINDING SUBUNIT CLPX-LIKE, MITOCHONDRIAL-RELATED"/>
    <property type="match status" value="1"/>
</dbReference>
<dbReference type="PANTHER" id="PTHR48102:SF3">
    <property type="entry name" value="ATP-DEPENDENT PROTEASE ATPASE SUBUNIT HSLU"/>
    <property type="match status" value="1"/>
</dbReference>
<dbReference type="Pfam" id="PF00004">
    <property type="entry name" value="AAA"/>
    <property type="match status" value="1"/>
</dbReference>
<dbReference type="Pfam" id="PF07724">
    <property type="entry name" value="AAA_2"/>
    <property type="match status" value="1"/>
</dbReference>
<dbReference type="SMART" id="SM00382">
    <property type="entry name" value="AAA"/>
    <property type="match status" value="1"/>
</dbReference>
<dbReference type="SMART" id="SM01086">
    <property type="entry name" value="ClpB_D2-small"/>
    <property type="match status" value="1"/>
</dbReference>
<dbReference type="SUPFAM" id="SSF52540">
    <property type="entry name" value="P-loop containing nucleoside triphosphate hydrolases"/>
    <property type="match status" value="1"/>
</dbReference>